<name>YH048_YEAST</name>
<dbReference type="EMBL" id="U11583">
    <property type="status" value="NOT_ANNOTATED_CDS"/>
    <property type="molecule type" value="Genomic_DNA"/>
</dbReference>
<dbReference type="EMBL" id="BK006934">
    <property type="protein sequence ID" value="DAA06639.1"/>
    <property type="molecule type" value="Genomic_DNA"/>
</dbReference>
<dbReference type="RefSeq" id="NP_878084.1">
    <property type="nucleotide sequence ID" value="NM_001184650.1"/>
</dbReference>
<dbReference type="BioGRID" id="37066">
    <property type="interactions" value="39"/>
</dbReference>
<dbReference type="FunCoup" id="Q3E758">
    <property type="interactions" value="11"/>
</dbReference>
<dbReference type="STRING" id="4932.YHL048C-A"/>
<dbReference type="PaxDb" id="4932-YHL048C-A"/>
<dbReference type="EnsemblFungi" id="YHL048C-A_mRNA">
    <property type="protein sequence ID" value="YHL048C-A"/>
    <property type="gene ID" value="YHL048C-A"/>
</dbReference>
<dbReference type="GeneID" id="1466524"/>
<dbReference type="KEGG" id="sce:YHL048C-A"/>
<dbReference type="AGR" id="SGD:S000028829"/>
<dbReference type="SGD" id="S000028829">
    <property type="gene designation" value="YHL048C-A"/>
</dbReference>
<dbReference type="VEuPathDB" id="FungiDB:YHL048C-A"/>
<dbReference type="HOGENOM" id="CLU_3224927_0_0_1"/>
<dbReference type="InParanoid" id="Q3E758"/>
<dbReference type="BioCyc" id="YEAST:G3O-31276-MONOMER"/>
<dbReference type="PRO" id="PR:Q3E758"/>
<dbReference type="Proteomes" id="UP000002311">
    <property type="component" value="Chromosome VIII"/>
</dbReference>
<dbReference type="GO" id="GO:0005777">
    <property type="term" value="C:peroxisome"/>
    <property type="evidence" value="ECO:0007005"/>
    <property type="project" value="SGD"/>
</dbReference>
<reference key="1">
    <citation type="journal article" date="1994" name="Science">
        <title>Complete nucleotide sequence of Saccharomyces cerevisiae chromosome VIII.</title>
        <authorList>
            <person name="Johnston M."/>
            <person name="Andrews S."/>
            <person name="Brinkman R."/>
            <person name="Cooper J."/>
            <person name="Ding H."/>
            <person name="Dover J."/>
            <person name="Du Z."/>
            <person name="Favello A."/>
            <person name="Fulton L."/>
            <person name="Gattung S."/>
            <person name="Geisel C."/>
            <person name="Kirsten J."/>
            <person name="Kucaba T."/>
            <person name="Hillier L.W."/>
            <person name="Jier M."/>
            <person name="Johnston L."/>
            <person name="Langston Y."/>
            <person name="Latreille P."/>
            <person name="Louis E.J."/>
            <person name="Macri C."/>
            <person name="Mardis E."/>
            <person name="Menezes S."/>
            <person name="Mouser L."/>
            <person name="Nhan M."/>
            <person name="Rifkin L."/>
            <person name="Riles L."/>
            <person name="St Peter H."/>
            <person name="Trevaskis E."/>
            <person name="Vaughan K."/>
            <person name="Vignati D."/>
            <person name="Wilcox L."/>
            <person name="Wohldman P."/>
            <person name="Waterston R."/>
            <person name="Wilson R."/>
            <person name="Vaudin M."/>
        </authorList>
    </citation>
    <scope>NUCLEOTIDE SEQUENCE [LARGE SCALE GENOMIC DNA]</scope>
    <source>
        <strain>ATCC 204508 / S288c</strain>
    </source>
</reference>
<reference key="2">
    <citation type="journal article" date="2014" name="G3 (Bethesda)">
        <title>The reference genome sequence of Saccharomyces cerevisiae: Then and now.</title>
        <authorList>
            <person name="Engel S.R."/>
            <person name="Dietrich F.S."/>
            <person name="Fisk D.G."/>
            <person name="Binkley G."/>
            <person name="Balakrishnan R."/>
            <person name="Costanzo M.C."/>
            <person name="Dwight S.S."/>
            <person name="Hitz B.C."/>
            <person name="Karra K."/>
            <person name="Nash R.S."/>
            <person name="Weng S."/>
            <person name="Wong E.D."/>
            <person name="Lloyd P."/>
            <person name="Skrzypek M.S."/>
            <person name="Miyasato S.R."/>
            <person name="Simison M."/>
            <person name="Cherry J.M."/>
        </authorList>
    </citation>
    <scope>GENOME REANNOTATION</scope>
    <source>
        <strain>ATCC 204508 / S288c</strain>
    </source>
</reference>
<reference key="3">
    <citation type="journal article" date="2002" name="Genome Res.">
        <title>Parallel identification of new genes in Saccharomyces cerevisiae.</title>
        <authorList>
            <person name="Oshiro G."/>
            <person name="Wodicka L.M."/>
            <person name="Washburn M.P."/>
            <person name="Yates J.R. III"/>
            <person name="Lockhart D.J."/>
            <person name="Winzeler E.A."/>
        </authorList>
    </citation>
    <scope>IDENTIFICATION BY MASS SPECTROMETRY</scope>
</reference>
<accession>Q3E758</accession>
<accession>D3DKS2</accession>
<gene>
    <name type="ordered locus">YHL048C-A</name>
</gene>
<organism>
    <name type="scientific">Saccharomyces cerevisiae (strain ATCC 204508 / S288c)</name>
    <name type="common">Baker's yeast</name>
    <dbReference type="NCBI Taxonomy" id="559292"/>
    <lineage>
        <taxon>Eukaryota</taxon>
        <taxon>Fungi</taxon>
        <taxon>Dikarya</taxon>
        <taxon>Ascomycota</taxon>
        <taxon>Saccharomycotina</taxon>
        <taxon>Saccharomycetes</taxon>
        <taxon>Saccharomycetales</taxon>
        <taxon>Saccharomycetaceae</taxon>
        <taxon>Saccharomyces</taxon>
    </lineage>
</organism>
<protein>
    <recommendedName>
        <fullName>Uncharacterized protein YHL048C-A</fullName>
    </recommendedName>
</protein>
<keyword id="KW-1185">Reference proteome</keyword>
<feature type="chain" id="PRO_0000245391" description="Uncharacterized protein YHL048C-A">
    <location>
        <begin position="1"/>
        <end position="44"/>
    </location>
</feature>
<sequence length="44" mass="5096">MHDIWVITTSPACFEILYKYCKQKGRARMGGLIVKIIRFNHASV</sequence>
<proteinExistence type="evidence at protein level"/>